<organism>
    <name type="scientific">Streptococcus mutans serotype c (strain ATCC 700610 / UA159)</name>
    <dbReference type="NCBI Taxonomy" id="210007"/>
    <lineage>
        <taxon>Bacteria</taxon>
        <taxon>Bacillati</taxon>
        <taxon>Bacillota</taxon>
        <taxon>Bacilli</taxon>
        <taxon>Lactobacillales</taxon>
        <taxon>Streptococcaceae</taxon>
        <taxon>Streptococcus</taxon>
    </lineage>
</organism>
<proteinExistence type="inferred from homology"/>
<dbReference type="EMBL" id="AE014133">
    <property type="protein sequence ID" value="AAN59608.1"/>
    <property type="molecule type" value="Genomic_DNA"/>
</dbReference>
<dbReference type="RefSeq" id="NP_722302.1">
    <property type="nucleotide sequence ID" value="NC_004350.2"/>
</dbReference>
<dbReference type="RefSeq" id="WP_002262318.1">
    <property type="nucleotide sequence ID" value="NC_004350.2"/>
</dbReference>
<dbReference type="SMR" id="Q8DS34"/>
<dbReference type="STRING" id="210007.SMU_2004"/>
<dbReference type="GeneID" id="93860207"/>
<dbReference type="KEGG" id="smu:SMU_2004"/>
<dbReference type="PATRIC" id="fig|210007.7.peg.1785"/>
<dbReference type="eggNOG" id="COG0361">
    <property type="taxonomic scope" value="Bacteria"/>
</dbReference>
<dbReference type="HOGENOM" id="CLU_151267_1_0_9"/>
<dbReference type="OrthoDB" id="9803250at2"/>
<dbReference type="PhylomeDB" id="Q8DS34"/>
<dbReference type="Proteomes" id="UP000002512">
    <property type="component" value="Chromosome"/>
</dbReference>
<dbReference type="GO" id="GO:0005829">
    <property type="term" value="C:cytosol"/>
    <property type="evidence" value="ECO:0007669"/>
    <property type="project" value="TreeGrafter"/>
</dbReference>
<dbReference type="GO" id="GO:0043022">
    <property type="term" value="F:ribosome binding"/>
    <property type="evidence" value="ECO:0007669"/>
    <property type="project" value="UniProtKB-UniRule"/>
</dbReference>
<dbReference type="GO" id="GO:0019843">
    <property type="term" value="F:rRNA binding"/>
    <property type="evidence" value="ECO:0007669"/>
    <property type="project" value="UniProtKB-UniRule"/>
</dbReference>
<dbReference type="GO" id="GO:0003743">
    <property type="term" value="F:translation initiation factor activity"/>
    <property type="evidence" value="ECO:0007669"/>
    <property type="project" value="UniProtKB-UniRule"/>
</dbReference>
<dbReference type="CDD" id="cd04451">
    <property type="entry name" value="S1_IF1"/>
    <property type="match status" value="1"/>
</dbReference>
<dbReference type="FunFam" id="2.40.50.140:FF:000002">
    <property type="entry name" value="Translation initiation factor IF-1"/>
    <property type="match status" value="1"/>
</dbReference>
<dbReference type="Gene3D" id="2.40.50.140">
    <property type="entry name" value="Nucleic acid-binding proteins"/>
    <property type="match status" value="1"/>
</dbReference>
<dbReference type="HAMAP" id="MF_00075">
    <property type="entry name" value="IF_1"/>
    <property type="match status" value="1"/>
</dbReference>
<dbReference type="InterPro" id="IPR012340">
    <property type="entry name" value="NA-bd_OB-fold"/>
</dbReference>
<dbReference type="InterPro" id="IPR006196">
    <property type="entry name" value="RNA-binding_domain_S1_IF1"/>
</dbReference>
<dbReference type="InterPro" id="IPR003029">
    <property type="entry name" value="S1_domain"/>
</dbReference>
<dbReference type="InterPro" id="IPR004368">
    <property type="entry name" value="TIF_IF1"/>
</dbReference>
<dbReference type="NCBIfam" id="TIGR00008">
    <property type="entry name" value="infA"/>
    <property type="match status" value="1"/>
</dbReference>
<dbReference type="PANTHER" id="PTHR33370">
    <property type="entry name" value="TRANSLATION INITIATION FACTOR IF-1, CHLOROPLASTIC"/>
    <property type="match status" value="1"/>
</dbReference>
<dbReference type="PANTHER" id="PTHR33370:SF1">
    <property type="entry name" value="TRANSLATION INITIATION FACTOR IF-1, CHLOROPLASTIC"/>
    <property type="match status" value="1"/>
</dbReference>
<dbReference type="Pfam" id="PF01176">
    <property type="entry name" value="eIF-1a"/>
    <property type="match status" value="1"/>
</dbReference>
<dbReference type="SMART" id="SM00316">
    <property type="entry name" value="S1"/>
    <property type="match status" value="1"/>
</dbReference>
<dbReference type="SUPFAM" id="SSF50249">
    <property type="entry name" value="Nucleic acid-binding proteins"/>
    <property type="match status" value="1"/>
</dbReference>
<dbReference type="PROSITE" id="PS50832">
    <property type="entry name" value="S1_IF1_TYPE"/>
    <property type="match status" value="1"/>
</dbReference>
<name>IF1_STRMU</name>
<gene>
    <name evidence="1" type="primary">infA</name>
    <name type="synonym">if1</name>
    <name type="ordered locus">SMU_2004</name>
</gene>
<sequence>MAKEDVIEIEGKVVETMPNAMFTVELENGHQILATVSGKIRKNYIRILVGDKVTVEMSPYDLTRGRITYRFK</sequence>
<keyword id="KW-0963">Cytoplasm</keyword>
<keyword id="KW-0396">Initiation factor</keyword>
<keyword id="KW-0648">Protein biosynthesis</keyword>
<keyword id="KW-1185">Reference proteome</keyword>
<keyword id="KW-0694">RNA-binding</keyword>
<keyword id="KW-0699">rRNA-binding</keyword>
<comment type="function">
    <text evidence="1">One of the essential components for the initiation of protein synthesis. Stabilizes the binding of IF-2 and IF-3 on the 30S subunit to which N-formylmethionyl-tRNA(fMet) subsequently binds. Helps modulate mRNA selection, yielding the 30S pre-initiation complex (PIC). Upon addition of the 50S ribosomal subunit IF-1, IF-2 and IF-3 are released leaving the mature 70S translation initiation complex.</text>
</comment>
<comment type="subunit">
    <text evidence="1">Component of the 30S ribosomal translation pre-initiation complex which assembles on the 30S ribosome in the order IF-2 and IF-3, IF-1 and N-formylmethionyl-tRNA(fMet); mRNA recruitment can occur at any time during PIC assembly.</text>
</comment>
<comment type="subcellular location">
    <subcellularLocation>
        <location evidence="1">Cytoplasm</location>
    </subcellularLocation>
</comment>
<comment type="similarity">
    <text evidence="1">Belongs to the IF-1 family.</text>
</comment>
<accession>Q8DS34</accession>
<evidence type="ECO:0000255" key="1">
    <source>
        <dbReference type="HAMAP-Rule" id="MF_00075"/>
    </source>
</evidence>
<reference key="1">
    <citation type="journal article" date="2002" name="Proc. Natl. Acad. Sci. U.S.A.">
        <title>Genome sequence of Streptococcus mutans UA159, a cariogenic dental pathogen.</title>
        <authorList>
            <person name="Ajdic D.J."/>
            <person name="McShan W.M."/>
            <person name="McLaughlin R.E."/>
            <person name="Savic G."/>
            <person name="Chang J."/>
            <person name="Carson M.B."/>
            <person name="Primeaux C."/>
            <person name="Tian R."/>
            <person name="Kenton S."/>
            <person name="Jia H.G."/>
            <person name="Lin S.P."/>
            <person name="Qian Y."/>
            <person name="Li S."/>
            <person name="Zhu H."/>
            <person name="Najar F.Z."/>
            <person name="Lai H."/>
            <person name="White J."/>
            <person name="Roe B.A."/>
            <person name="Ferretti J.J."/>
        </authorList>
    </citation>
    <scope>NUCLEOTIDE SEQUENCE [LARGE SCALE GENOMIC DNA]</scope>
    <source>
        <strain>ATCC 700610 / UA159</strain>
    </source>
</reference>
<feature type="chain" id="PRO_0000095878" description="Translation initiation factor IF-1">
    <location>
        <begin position="1"/>
        <end position="72"/>
    </location>
</feature>
<feature type="domain" description="S1-like" evidence="1">
    <location>
        <begin position="1"/>
        <end position="72"/>
    </location>
</feature>
<protein>
    <recommendedName>
        <fullName evidence="1">Translation initiation factor IF-1</fullName>
    </recommendedName>
</protein>